<organism>
    <name type="scientific">Encephalitozoon cuniculi (strain GB-M1)</name>
    <name type="common">Microsporidian parasite</name>
    <dbReference type="NCBI Taxonomy" id="284813"/>
    <lineage>
        <taxon>Eukaryota</taxon>
        <taxon>Fungi</taxon>
        <taxon>Fungi incertae sedis</taxon>
        <taxon>Microsporidia</taxon>
        <taxon>Unikaryonidae</taxon>
        <taxon>Encephalitozoon</taxon>
    </lineage>
</organism>
<feature type="chain" id="PRO_0000383110" description="SEC1 family transport protein SLY1">
    <location>
        <begin position="1"/>
        <end position="521"/>
    </location>
</feature>
<accession>Q8SS97</accession>
<proteinExistence type="evidence at protein level"/>
<gene>
    <name type="primary">SLY1</name>
    <name type="ordered locus">ECU03_0900</name>
</gene>
<evidence type="ECO:0000250" key="1"/>
<evidence type="ECO:0000269" key="2">
    <source>
    </source>
</evidence>
<evidence type="ECO:0000305" key="3"/>
<reference key="1">
    <citation type="journal article" date="2001" name="Nature">
        <title>Genome sequence and gene compaction of the eukaryote parasite Encephalitozoon cuniculi.</title>
        <authorList>
            <person name="Katinka M.D."/>
            <person name="Duprat S."/>
            <person name="Cornillot E."/>
            <person name="Metenier G."/>
            <person name="Thomarat F."/>
            <person name="Prensier G."/>
            <person name="Barbe V."/>
            <person name="Peyretaillade E."/>
            <person name="Brottier P."/>
            <person name="Wincker P."/>
            <person name="Delbac F."/>
            <person name="El Alaoui H."/>
            <person name="Peyret P."/>
            <person name="Saurin W."/>
            <person name="Gouy M."/>
            <person name="Weissenbach J."/>
            <person name="Vivares C.P."/>
        </authorList>
    </citation>
    <scope>NUCLEOTIDE SEQUENCE [LARGE SCALE GENOMIC DNA]</scope>
    <source>
        <strain>GB-M1</strain>
    </source>
</reference>
<reference key="2">
    <citation type="journal article" date="2006" name="Proteomics">
        <title>Proteomic analysis of the eukaryotic parasite Encephalitozoon cuniculi (microsporidia): a reference map for proteins expressed in late sporogonial stages.</title>
        <authorList>
            <person name="Brosson D."/>
            <person name="Kuhn L."/>
            <person name="Delbac F."/>
            <person name="Garin J."/>
            <person name="Vivares C.P."/>
            <person name="Texier C."/>
        </authorList>
    </citation>
    <scope>IDENTIFICATION BY MASS SPECTROMETRY [LARGE SCALE ANALYSIS]</scope>
    <scope>DEVELOPMENTAL STAGE</scope>
</reference>
<keyword id="KW-0963">Cytoplasm</keyword>
<keyword id="KW-0256">Endoplasmic reticulum</keyword>
<keyword id="KW-0931">ER-Golgi transport</keyword>
<keyword id="KW-0333">Golgi apparatus</keyword>
<keyword id="KW-0472">Membrane</keyword>
<keyword id="KW-0653">Protein transport</keyword>
<keyword id="KW-1185">Reference proteome</keyword>
<keyword id="KW-0813">Transport</keyword>
<name>SLY1_ENCCU</name>
<sequence length="521" mass="59195">MLRELQKQRIKAFLVAPNNPWKILVLDSRTQQIIGPLMKVSELRECGITAHFLVTQERHPISNTPAVYFVESADGVLDDVLAELYSEYYLNFATSVTRGEIESLGLGLSERGLGLRIRSVYDQFVDFIALQDDMFTLGMKGSFIEMENPDTWRRMVMSVMSVFVTLGEVPFIVATDDDVTTQMARMLETKIRNTGVIKRGSKRPVLVLVSRSHDVITPVQHVWSYSALMNDLFALESNKITLKSGKVFDLDPQDELWRRNANEYFPVVVERVEKELLEYKKEMALRSIDEKTDKKVIQEALDKAPELAKRNESVNAHISICSEMVEMIKERAIDDFYKVEKGGHTNQELIELSEKGSDEDVLRLAILLLNTKDFDLIDPLLRKRKIKSKAIEFFRRHGGTRSEKLGTLYSQVVTSLMGNVKKLLPVKEQTPISSLVETIYGDIKSQIYSGLRVFDSMGSKSIYASEISRLVVFGVGGGTYTELKTLKLLEERIGVPIIYGSTEILNAREFLRQVEGRMSLD</sequence>
<comment type="function">
    <text evidence="1">Involved in vesicular transport between the endoplasmic reticulum and the Golgi.</text>
</comment>
<comment type="subcellular location">
    <subcellularLocation>
        <location evidence="1">Cytoplasm</location>
    </subcellularLocation>
    <subcellularLocation>
        <location evidence="1">Endoplasmic reticulum membrane</location>
        <topology evidence="1">Peripheral membrane protein</topology>
    </subcellularLocation>
    <subcellularLocation>
        <location evidence="1">Golgi apparatus</location>
        <location evidence="1">Golgi stack membrane</location>
        <topology evidence="1">Peripheral membrane protein</topology>
    </subcellularLocation>
</comment>
<comment type="developmental stage">
    <text evidence="2">Expressed in late sporogonial stages.</text>
</comment>
<comment type="similarity">
    <text evidence="3">Belongs to the STXBP/unc-18/SEC1 family.</text>
</comment>
<protein>
    <recommendedName>
        <fullName>SEC1 family transport protein SLY1</fullName>
    </recommendedName>
</protein>
<dbReference type="EMBL" id="AL590443">
    <property type="protein sequence ID" value="CAD26234.1"/>
    <property type="molecule type" value="Genomic_DNA"/>
</dbReference>
<dbReference type="RefSeq" id="NP_597599.1">
    <property type="nucleotide sequence ID" value="NM_001040963.1"/>
</dbReference>
<dbReference type="SMR" id="Q8SS97"/>
<dbReference type="FunCoup" id="Q8SS97">
    <property type="interactions" value="314"/>
</dbReference>
<dbReference type="STRING" id="284813.Q8SS97"/>
<dbReference type="GeneID" id="858761"/>
<dbReference type="KEGG" id="ecu:ECU03_0900"/>
<dbReference type="VEuPathDB" id="MicrosporidiaDB:ECU03_0900"/>
<dbReference type="HOGENOM" id="CLU_016216_4_0_1"/>
<dbReference type="InParanoid" id="Q8SS97"/>
<dbReference type="OMA" id="DAHMSIC"/>
<dbReference type="OrthoDB" id="10251230at2759"/>
<dbReference type="Proteomes" id="UP000000819">
    <property type="component" value="Chromosome III"/>
</dbReference>
<dbReference type="GO" id="GO:0005789">
    <property type="term" value="C:endoplasmic reticulum membrane"/>
    <property type="evidence" value="ECO:0007669"/>
    <property type="project" value="UniProtKB-SubCell"/>
</dbReference>
<dbReference type="GO" id="GO:0032580">
    <property type="term" value="C:Golgi cisterna membrane"/>
    <property type="evidence" value="ECO:0007669"/>
    <property type="project" value="UniProtKB-SubCell"/>
</dbReference>
<dbReference type="GO" id="GO:0015031">
    <property type="term" value="P:protein transport"/>
    <property type="evidence" value="ECO:0007669"/>
    <property type="project" value="UniProtKB-KW"/>
</dbReference>
<dbReference type="GO" id="GO:0016192">
    <property type="term" value="P:vesicle-mediated transport"/>
    <property type="evidence" value="ECO:0007669"/>
    <property type="project" value="UniProtKB-KW"/>
</dbReference>
<dbReference type="Gene3D" id="1.25.40.60">
    <property type="match status" value="1"/>
</dbReference>
<dbReference type="Gene3D" id="3.40.50.1910">
    <property type="match status" value="1"/>
</dbReference>
<dbReference type="Gene3D" id="3.40.50.2060">
    <property type="match status" value="1"/>
</dbReference>
<dbReference type="Gene3D" id="3.90.830.10">
    <property type="entry name" value="Syntaxin Binding Protein 1, Chain A, domain 2"/>
    <property type="match status" value="1"/>
</dbReference>
<dbReference type="InterPro" id="IPR043154">
    <property type="entry name" value="Sec-1-like_dom1"/>
</dbReference>
<dbReference type="InterPro" id="IPR043127">
    <property type="entry name" value="Sec-1-like_dom3a"/>
</dbReference>
<dbReference type="InterPro" id="IPR001619">
    <property type="entry name" value="Sec1-like"/>
</dbReference>
<dbReference type="InterPro" id="IPR027482">
    <property type="entry name" value="Sec1-like_dom2"/>
</dbReference>
<dbReference type="InterPro" id="IPR036045">
    <property type="entry name" value="Sec1-like_sf"/>
</dbReference>
<dbReference type="PANTHER" id="PTHR11679">
    <property type="entry name" value="VESICLE PROTEIN SORTING-ASSOCIATED"/>
    <property type="match status" value="1"/>
</dbReference>
<dbReference type="Pfam" id="PF00995">
    <property type="entry name" value="Sec1"/>
    <property type="match status" value="1"/>
</dbReference>
<dbReference type="PIRSF" id="PIRSF005715">
    <property type="entry name" value="VPS45_Sec1"/>
    <property type="match status" value="1"/>
</dbReference>
<dbReference type="SUPFAM" id="SSF56815">
    <property type="entry name" value="Sec1/munc18-like (SM) proteins"/>
    <property type="match status" value="1"/>
</dbReference>